<name>RS6_MYCA9</name>
<sequence length="96" mass="10640">MRQYEIMVILDPTLDERTVAPSLDTFLNVVRGDGGTVSKVEVWGKRRLAYEIAKHTEGIYAVIDVVAAPATVSELDRQLGLNESVLRTKVLRTGAR</sequence>
<evidence type="ECO:0000255" key="1">
    <source>
        <dbReference type="HAMAP-Rule" id="MF_00360"/>
    </source>
</evidence>
<evidence type="ECO:0000305" key="2"/>
<comment type="function">
    <text evidence="1">Binds together with bS18 to 16S ribosomal RNA.</text>
</comment>
<comment type="similarity">
    <text evidence="1">Belongs to the bacterial ribosomal protein bS6 family.</text>
</comment>
<gene>
    <name evidence="1" type="primary">rpsF</name>
    <name type="ordered locus">MAB_4899c</name>
</gene>
<accession>B1MMI2</accession>
<organism>
    <name type="scientific">Mycobacteroides abscessus (strain ATCC 19977 / DSM 44196 / CCUG 20993 / CIP 104536 / JCM 13569 / NCTC 13031 / TMC 1543 / L948)</name>
    <name type="common">Mycobacterium abscessus</name>
    <dbReference type="NCBI Taxonomy" id="561007"/>
    <lineage>
        <taxon>Bacteria</taxon>
        <taxon>Bacillati</taxon>
        <taxon>Actinomycetota</taxon>
        <taxon>Actinomycetes</taxon>
        <taxon>Mycobacteriales</taxon>
        <taxon>Mycobacteriaceae</taxon>
        <taxon>Mycobacteroides</taxon>
        <taxon>Mycobacteroides abscessus</taxon>
    </lineage>
</organism>
<dbReference type="EMBL" id="CU458896">
    <property type="protein sequence ID" value="CAM64967.1"/>
    <property type="molecule type" value="Genomic_DNA"/>
</dbReference>
<dbReference type="RefSeq" id="WP_005072064.1">
    <property type="nucleotide sequence ID" value="NZ_MLCG01000007.1"/>
</dbReference>
<dbReference type="SMR" id="B1MMI2"/>
<dbReference type="GeneID" id="93381836"/>
<dbReference type="KEGG" id="mab:MAB_4899c"/>
<dbReference type="Proteomes" id="UP000007137">
    <property type="component" value="Chromosome"/>
</dbReference>
<dbReference type="GO" id="GO:0005737">
    <property type="term" value="C:cytoplasm"/>
    <property type="evidence" value="ECO:0007669"/>
    <property type="project" value="UniProtKB-ARBA"/>
</dbReference>
<dbReference type="GO" id="GO:1990904">
    <property type="term" value="C:ribonucleoprotein complex"/>
    <property type="evidence" value="ECO:0007669"/>
    <property type="project" value="UniProtKB-KW"/>
</dbReference>
<dbReference type="GO" id="GO:0005840">
    <property type="term" value="C:ribosome"/>
    <property type="evidence" value="ECO:0007669"/>
    <property type="project" value="UniProtKB-KW"/>
</dbReference>
<dbReference type="GO" id="GO:0070181">
    <property type="term" value="F:small ribosomal subunit rRNA binding"/>
    <property type="evidence" value="ECO:0007669"/>
    <property type="project" value="TreeGrafter"/>
</dbReference>
<dbReference type="GO" id="GO:0003735">
    <property type="term" value="F:structural constituent of ribosome"/>
    <property type="evidence" value="ECO:0007669"/>
    <property type="project" value="InterPro"/>
</dbReference>
<dbReference type="GO" id="GO:0006412">
    <property type="term" value="P:translation"/>
    <property type="evidence" value="ECO:0007669"/>
    <property type="project" value="UniProtKB-UniRule"/>
</dbReference>
<dbReference type="CDD" id="cd00473">
    <property type="entry name" value="bS6"/>
    <property type="match status" value="1"/>
</dbReference>
<dbReference type="FunFam" id="3.30.70.60:FF:000002">
    <property type="entry name" value="30S ribosomal protein S6"/>
    <property type="match status" value="1"/>
</dbReference>
<dbReference type="Gene3D" id="3.30.70.60">
    <property type="match status" value="1"/>
</dbReference>
<dbReference type="HAMAP" id="MF_00360">
    <property type="entry name" value="Ribosomal_bS6"/>
    <property type="match status" value="1"/>
</dbReference>
<dbReference type="InterPro" id="IPR000529">
    <property type="entry name" value="Ribosomal_bS6"/>
</dbReference>
<dbReference type="InterPro" id="IPR020815">
    <property type="entry name" value="Ribosomal_bS6_CS"/>
</dbReference>
<dbReference type="InterPro" id="IPR035980">
    <property type="entry name" value="Ribosomal_bS6_sf"/>
</dbReference>
<dbReference type="InterPro" id="IPR020814">
    <property type="entry name" value="Ribosomal_S6_plastid/chlpt"/>
</dbReference>
<dbReference type="InterPro" id="IPR014717">
    <property type="entry name" value="Transl_elong_EF1B/ribsomal_bS6"/>
</dbReference>
<dbReference type="NCBIfam" id="TIGR00166">
    <property type="entry name" value="S6"/>
    <property type="match status" value="1"/>
</dbReference>
<dbReference type="PANTHER" id="PTHR21011">
    <property type="entry name" value="MITOCHONDRIAL 28S RIBOSOMAL PROTEIN S6"/>
    <property type="match status" value="1"/>
</dbReference>
<dbReference type="PANTHER" id="PTHR21011:SF1">
    <property type="entry name" value="SMALL RIBOSOMAL SUBUNIT PROTEIN BS6M"/>
    <property type="match status" value="1"/>
</dbReference>
<dbReference type="Pfam" id="PF01250">
    <property type="entry name" value="Ribosomal_S6"/>
    <property type="match status" value="1"/>
</dbReference>
<dbReference type="SUPFAM" id="SSF54995">
    <property type="entry name" value="Ribosomal protein S6"/>
    <property type="match status" value="1"/>
</dbReference>
<dbReference type="PROSITE" id="PS01048">
    <property type="entry name" value="RIBOSOMAL_S6"/>
    <property type="match status" value="1"/>
</dbReference>
<protein>
    <recommendedName>
        <fullName evidence="1">Small ribosomal subunit protein bS6</fullName>
    </recommendedName>
    <alternativeName>
        <fullName evidence="2">30S ribosomal protein S6</fullName>
    </alternativeName>
</protein>
<proteinExistence type="inferred from homology"/>
<reference key="1">
    <citation type="journal article" date="2009" name="PLoS ONE">
        <title>Non mycobacterial virulence genes in the genome of the emerging pathogen Mycobacterium abscessus.</title>
        <authorList>
            <person name="Ripoll F."/>
            <person name="Pasek S."/>
            <person name="Schenowitz C."/>
            <person name="Dossat C."/>
            <person name="Barbe V."/>
            <person name="Rottman M."/>
            <person name="Macheras E."/>
            <person name="Heym B."/>
            <person name="Herrmann J.L."/>
            <person name="Daffe M."/>
            <person name="Brosch R."/>
            <person name="Risler J.L."/>
            <person name="Gaillard J.L."/>
        </authorList>
    </citation>
    <scope>NUCLEOTIDE SEQUENCE [LARGE SCALE GENOMIC DNA]</scope>
    <source>
        <strain>ATCC 19977 / DSM 44196 / CCUG 20993 / CIP 104536 / JCM 13569 / NCTC 13031 / TMC 1543 / L948</strain>
    </source>
</reference>
<feature type="chain" id="PRO_1000120777" description="Small ribosomal subunit protein bS6">
    <location>
        <begin position="1"/>
        <end position="96"/>
    </location>
</feature>
<keyword id="KW-1185">Reference proteome</keyword>
<keyword id="KW-0687">Ribonucleoprotein</keyword>
<keyword id="KW-0689">Ribosomal protein</keyword>
<keyword id="KW-0694">RNA-binding</keyword>
<keyword id="KW-0699">rRNA-binding</keyword>